<gene>
    <name evidence="1" type="primary">smc</name>
    <name type="ordered locus">Acid345_2638</name>
</gene>
<dbReference type="EMBL" id="CP000360">
    <property type="protein sequence ID" value="ABF41639.1"/>
    <property type="molecule type" value="Genomic_DNA"/>
</dbReference>
<dbReference type="RefSeq" id="WP_011523440.1">
    <property type="nucleotide sequence ID" value="NC_008009.1"/>
</dbReference>
<dbReference type="SMR" id="Q1INB1"/>
<dbReference type="STRING" id="204669.Acid345_2638"/>
<dbReference type="EnsemblBacteria" id="ABF41639">
    <property type="protein sequence ID" value="ABF41639"/>
    <property type="gene ID" value="Acid345_2638"/>
</dbReference>
<dbReference type="KEGG" id="aba:Acid345_2638"/>
<dbReference type="eggNOG" id="COG1196">
    <property type="taxonomic scope" value="Bacteria"/>
</dbReference>
<dbReference type="HOGENOM" id="CLU_001042_2_2_0"/>
<dbReference type="OrthoDB" id="9808768at2"/>
<dbReference type="Proteomes" id="UP000002432">
    <property type="component" value="Chromosome"/>
</dbReference>
<dbReference type="GO" id="GO:0005694">
    <property type="term" value="C:chromosome"/>
    <property type="evidence" value="ECO:0007669"/>
    <property type="project" value="InterPro"/>
</dbReference>
<dbReference type="GO" id="GO:0005737">
    <property type="term" value="C:cytoplasm"/>
    <property type="evidence" value="ECO:0007669"/>
    <property type="project" value="UniProtKB-SubCell"/>
</dbReference>
<dbReference type="GO" id="GO:0005524">
    <property type="term" value="F:ATP binding"/>
    <property type="evidence" value="ECO:0007669"/>
    <property type="project" value="UniProtKB-UniRule"/>
</dbReference>
<dbReference type="GO" id="GO:0016887">
    <property type="term" value="F:ATP hydrolysis activity"/>
    <property type="evidence" value="ECO:0007669"/>
    <property type="project" value="InterPro"/>
</dbReference>
<dbReference type="GO" id="GO:0003677">
    <property type="term" value="F:DNA binding"/>
    <property type="evidence" value="ECO:0007669"/>
    <property type="project" value="UniProtKB-UniRule"/>
</dbReference>
<dbReference type="GO" id="GO:0030261">
    <property type="term" value="P:chromosome condensation"/>
    <property type="evidence" value="ECO:0007669"/>
    <property type="project" value="InterPro"/>
</dbReference>
<dbReference type="GO" id="GO:0007059">
    <property type="term" value="P:chromosome segregation"/>
    <property type="evidence" value="ECO:0007669"/>
    <property type="project" value="UniProtKB-UniRule"/>
</dbReference>
<dbReference type="GO" id="GO:0006260">
    <property type="term" value="P:DNA replication"/>
    <property type="evidence" value="ECO:0007669"/>
    <property type="project" value="UniProtKB-UniRule"/>
</dbReference>
<dbReference type="GO" id="GO:0007062">
    <property type="term" value="P:sister chromatid cohesion"/>
    <property type="evidence" value="ECO:0007669"/>
    <property type="project" value="InterPro"/>
</dbReference>
<dbReference type="CDD" id="cd03278">
    <property type="entry name" value="ABC_SMC_barmotin"/>
    <property type="match status" value="1"/>
</dbReference>
<dbReference type="Gene3D" id="1.10.287.1490">
    <property type="match status" value="1"/>
</dbReference>
<dbReference type="Gene3D" id="1.20.1060.20">
    <property type="match status" value="1"/>
</dbReference>
<dbReference type="Gene3D" id="3.30.70.1620">
    <property type="match status" value="1"/>
</dbReference>
<dbReference type="Gene3D" id="3.40.50.300">
    <property type="entry name" value="P-loop containing nucleotide triphosphate hydrolases"/>
    <property type="match status" value="3"/>
</dbReference>
<dbReference type="HAMAP" id="MF_01894">
    <property type="entry name" value="Smc_prok"/>
    <property type="match status" value="1"/>
</dbReference>
<dbReference type="InterPro" id="IPR027417">
    <property type="entry name" value="P-loop_NTPase"/>
</dbReference>
<dbReference type="InterPro" id="IPR003395">
    <property type="entry name" value="RecF/RecN/SMC_N"/>
</dbReference>
<dbReference type="InterPro" id="IPR024704">
    <property type="entry name" value="SMC"/>
</dbReference>
<dbReference type="InterPro" id="IPR010935">
    <property type="entry name" value="SMC_hinge"/>
</dbReference>
<dbReference type="InterPro" id="IPR036277">
    <property type="entry name" value="SMC_hinge_sf"/>
</dbReference>
<dbReference type="InterPro" id="IPR011890">
    <property type="entry name" value="SMC_prok"/>
</dbReference>
<dbReference type="NCBIfam" id="TIGR02168">
    <property type="entry name" value="SMC_prok_B"/>
    <property type="match status" value="1"/>
</dbReference>
<dbReference type="PANTHER" id="PTHR43977">
    <property type="entry name" value="STRUCTURAL MAINTENANCE OF CHROMOSOMES PROTEIN 3"/>
    <property type="match status" value="1"/>
</dbReference>
<dbReference type="Pfam" id="PF06470">
    <property type="entry name" value="SMC_hinge"/>
    <property type="match status" value="1"/>
</dbReference>
<dbReference type="Pfam" id="PF02463">
    <property type="entry name" value="SMC_N"/>
    <property type="match status" value="2"/>
</dbReference>
<dbReference type="PIRSF" id="PIRSF005719">
    <property type="entry name" value="SMC"/>
    <property type="match status" value="1"/>
</dbReference>
<dbReference type="SMART" id="SM00968">
    <property type="entry name" value="SMC_hinge"/>
    <property type="match status" value="1"/>
</dbReference>
<dbReference type="SUPFAM" id="SSF52540">
    <property type="entry name" value="P-loop containing nucleoside triphosphate hydrolases"/>
    <property type="match status" value="1"/>
</dbReference>
<dbReference type="SUPFAM" id="SSF75553">
    <property type="entry name" value="Smc hinge domain"/>
    <property type="match status" value="1"/>
</dbReference>
<keyword id="KW-0067">ATP-binding</keyword>
<keyword id="KW-0175">Coiled coil</keyword>
<keyword id="KW-0963">Cytoplasm</keyword>
<keyword id="KW-0238">DNA-binding</keyword>
<keyword id="KW-0547">Nucleotide-binding</keyword>
<keyword id="KW-1185">Reference proteome</keyword>
<evidence type="ECO:0000255" key="1">
    <source>
        <dbReference type="HAMAP-Rule" id="MF_01894"/>
    </source>
</evidence>
<evidence type="ECO:0000256" key="2">
    <source>
        <dbReference type="SAM" id="MobiDB-lite"/>
    </source>
</evidence>
<comment type="function">
    <text evidence="1">Required for chromosome condensation and partitioning.</text>
</comment>
<comment type="subunit">
    <text evidence="1">Homodimer.</text>
</comment>
<comment type="subcellular location">
    <subcellularLocation>
        <location evidence="1">Cytoplasm</location>
    </subcellularLocation>
</comment>
<comment type="domain">
    <text evidence="1">Contains large globular domains required for ATP hydrolysis at each terminus and a third globular domain forming a flexible SMC hinge near the middle of the molecule. These domains are separated by coiled-coil structures.</text>
</comment>
<comment type="similarity">
    <text evidence="1">Belongs to the SMC family.</text>
</comment>
<organism>
    <name type="scientific">Koribacter versatilis (strain Ellin345)</name>
    <dbReference type="NCBI Taxonomy" id="204669"/>
    <lineage>
        <taxon>Bacteria</taxon>
        <taxon>Pseudomonadati</taxon>
        <taxon>Acidobacteriota</taxon>
        <taxon>Terriglobia</taxon>
        <taxon>Terriglobales</taxon>
        <taxon>Candidatus Korobacteraceae</taxon>
        <taxon>Candidatus Korobacter</taxon>
    </lineage>
</organism>
<sequence length="1308" mass="145208">MLKLKKLQLLGFKSFCDRTELKFPGDGIAAIVGPNGCGKSNIADAISWVLGEQSAKSLRGIHMQDVIFAGTRDRKPTGMAEVSLTLIDPEQYEGKIVEPEIEIRDEMPDDWDEAAAREASMEEVDEYTAEVQPGTNTEAEATEQQAAPSEGAAPTTEATAPSTENEAAPSEVAEGQPSDAQAAVINPNAVVLKIRRRKFNTNRFKKGEICVTRRLFRSGDSEYLLNGKLSRLRDVHDIFMGTGLGPESYAIIEQGRIGQILSSKPTDRRAIIEEAAGITKYKTKKRLAEARLEDAKSNLARVNDIFDEVTRQMNSLKRQAAKAERYAKLRDEMREKLRVVLASKFALIDAEIAGLEAELTTVTEEIATRTDAVQQMDNEHGERVQRGYAIDAEAKQNRESLNNVSREMDRAAQRRRTNEERCAELVARSAGAEAEIQNTTEQLGRLEEELATNRQVLESAAADVAVAQSDLQTKQQEASAAAANLMNVEREQEQRRSQIFQAVNAASNVRNRITQAEERIANLDREHGRVTGELSSATLQLESFGGQRGQLGLEFESANTRVNALSSEITDARGSLQQKRQEEIEAKRHVDTLRAEYATLLGKKGSLESVINEHGYSTESVKRLFQSGGLREGNTPAGVLADFLEVEDKYEHVVEDFLRDELNYVVVKSWGAADEGLRLLKGDVDGRATFLVHPSDSQAKFSFVLDESMRLPFTPDRVTPMKNCIRVLNGFGKSLEVVLPKLGNGYIVPDPAIGRELALENPDAFFLSQSGECFHNVTVTGGKQRSQGPLSLKRELRDVMRCIDDVERSLRDGEARVLMLGKEIAELTSLLQRLEDEKREGEKQAMTSGHTLRQLENEMARVRDRHATYERELQRVSNEKSERENAIGGLRMELEAAEARHQELEAAMNAATQSLDELRTARDNASHAASEARAQAAALEERHRAAASSLQRIESMVQEVSARIGKLKGQVESAAAEKQQRESENETIAEQLVTWTAEREAAEARDRELQTESEQVRARIAEIEEELKTARQALDAARDRRGELHASVARLQSDGEHMAETCVQELSVTRPDLMAIEELPRLTGDELAVADTEQKDMRTKLENMGPVNMMALEEYKETAQRHEFLETQRKDLLDSIENTQNTIKEIDQITKVKFDEAFAAINENFGKAFKKLFGGGQGFMKLTDELNSSDSGIDVIASPPGKKLQNVLLLSGGEKTLTAFSLLVGIFQYAPSPFCILDEVDAPLDETNVARFNELVKEMSMQTQFILITHSKRTMATAPVMYGVTMQEPGVSKIVSVRFGEEAARATA</sequence>
<proteinExistence type="inferred from homology"/>
<accession>Q1INB1</accession>
<reference key="1">
    <citation type="journal article" date="2009" name="Appl. Environ. Microbiol.">
        <title>Three genomes from the phylum Acidobacteria provide insight into the lifestyles of these microorganisms in soils.</title>
        <authorList>
            <person name="Ward N.L."/>
            <person name="Challacombe J.F."/>
            <person name="Janssen P.H."/>
            <person name="Henrissat B."/>
            <person name="Coutinho P.M."/>
            <person name="Wu M."/>
            <person name="Xie G."/>
            <person name="Haft D.H."/>
            <person name="Sait M."/>
            <person name="Badger J."/>
            <person name="Barabote R.D."/>
            <person name="Bradley B."/>
            <person name="Brettin T.S."/>
            <person name="Brinkac L.M."/>
            <person name="Bruce D."/>
            <person name="Creasy T."/>
            <person name="Daugherty S.C."/>
            <person name="Davidsen T.M."/>
            <person name="DeBoy R.T."/>
            <person name="Detter J.C."/>
            <person name="Dodson R.J."/>
            <person name="Durkin A.S."/>
            <person name="Ganapathy A."/>
            <person name="Gwinn-Giglio M."/>
            <person name="Han C.S."/>
            <person name="Khouri H."/>
            <person name="Kiss H."/>
            <person name="Kothari S.P."/>
            <person name="Madupu R."/>
            <person name="Nelson K.E."/>
            <person name="Nelson W.C."/>
            <person name="Paulsen I."/>
            <person name="Penn K."/>
            <person name="Ren Q."/>
            <person name="Rosovitz M.J."/>
            <person name="Selengut J.D."/>
            <person name="Shrivastava S."/>
            <person name="Sullivan S.A."/>
            <person name="Tapia R."/>
            <person name="Thompson L.S."/>
            <person name="Watkins K.L."/>
            <person name="Yang Q."/>
            <person name="Yu C."/>
            <person name="Zafar N."/>
            <person name="Zhou L."/>
            <person name="Kuske C.R."/>
        </authorList>
    </citation>
    <scope>NUCLEOTIDE SEQUENCE [LARGE SCALE GENOMIC DNA]</scope>
    <source>
        <strain>Ellin345</strain>
    </source>
</reference>
<feature type="chain" id="PRO_0000409261" description="Chromosome partition protein Smc">
    <location>
        <begin position="1"/>
        <end position="1308"/>
    </location>
</feature>
<feature type="domain" description="SMC hinge">
    <location>
        <begin position="637"/>
        <end position="757"/>
    </location>
</feature>
<feature type="region of interest" description="Disordered" evidence="2">
    <location>
        <begin position="115"/>
        <end position="181"/>
    </location>
</feature>
<feature type="coiled-coil region" evidence="1">
    <location>
        <begin position="278"/>
        <end position="600"/>
    </location>
</feature>
<feature type="coiled-coil region" evidence="1">
    <location>
        <begin position="791"/>
        <end position="1046"/>
    </location>
</feature>
<feature type="coiled-coil region" evidence="1">
    <location>
        <begin position="1110"/>
        <end position="1148"/>
    </location>
</feature>
<feature type="compositionally biased region" description="Low complexity" evidence="2">
    <location>
        <begin position="137"/>
        <end position="169"/>
    </location>
</feature>
<feature type="binding site" evidence="1">
    <location>
        <begin position="34"/>
        <end position="41"/>
    </location>
    <ligand>
        <name>ATP</name>
        <dbReference type="ChEBI" id="CHEBI:30616"/>
    </ligand>
</feature>
<name>SMC_KORVE</name>
<protein>
    <recommendedName>
        <fullName evidence="1">Chromosome partition protein Smc</fullName>
    </recommendedName>
</protein>